<protein>
    <recommendedName>
        <fullName>DNA mismatch repair protein MLH1</fullName>
    </recommendedName>
    <alternativeName>
        <fullName>MutL protein homolog 1</fullName>
    </alternativeName>
    <alternativeName>
        <fullName>Protein MUTL-HOMOLOGUE 1</fullName>
        <shortName>AtMLH1</shortName>
    </alternativeName>
</protein>
<name>MLH1_ARATH</name>
<comment type="function">
    <text evidence="4 5 9">Involved in DNA mismatch repair (MMR), correcting insertion-deletion loops (IDLs) resulting from DNA replication, DNA damage or from recombination events between non-identical sequences during meiosis. Component of the MutLbeta heterodimer, which probably forms a ternary complex with the MutSbeta heterodimer that initially recognizes the DNA mismatches. This complex is thought to be responsible for directing the downstream MMR events, including strand discrimination, excision, and resynthesis. Plays a major role in promoting meiotic crossing-over and is involved in maintaining the genetic stability of simple sequence repeats by correction of frameshift intermediates.</text>
</comment>
<comment type="subunit">
    <text evidence="1">Heterodimer of MLH1 and PMS1, called MutLalpha, which is the major MMR MutL activity correcting base-base mismatches as well as IDLs. The heterodimer binds double strand DNA independently of a mismatch with positive cooperativity and has more than one DNA binding site. Heterodimer of MLH1 and MLH3, called MutLbeta, which is involved in correction of a specific subset of IDLs when associated with MutSbeta (By similarity).</text>
</comment>
<comment type="subcellular location">
    <subcellularLocation>
        <location evidence="3 4 6 7 8">Nucleus</location>
    </subcellularLocation>
</comment>
<comment type="tissue specificity">
    <text evidence="3">Ubiquitous.</text>
</comment>
<comment type="developmental stage">
    <text evidence="3 4 6 7 8">Expressed during prophase I of meiosis: detected from pachytene to diakinesis stages.</text>
</comment>
<comment type="disruption phenotype">
    <text evidence="5">Reduced fertility and mitotic defects: 72 per cent reduction in homologous somatic recombination.</text>
</comment>
<comment type="similarity">
    <text evidence="10">Belongs to the DNA mismatch repair MutL/HexB family.</text>
</comment>
<keyword id="KW-0227">DNA damage</keyword>
<keyword id="KW-0234">DNA repair</keyword>
<keyword id="KW-0539">Nucleus</keyword>
<keyword id="KW-1185">Reference proteome</keyword>
<proteinExistence type="evidence at transcript level"/>
<evidence type="ECO:0000250" key="1"/>
<evidence type="ECO:0000256" key="2">
    <source>
        <dbReference type="SAM" id="MobiDB-lite"/>
    </source>
</evidence>
<evidence type="ECO:0000269" key="3">
    <source>
    </source>
</evidence>
<evidence type="ECO:0000269" key="4">
    <source>
    </source>
</evidence>
<evidence type="ECO:0000269" key="5">
    <source>
    </source>
</evidence>
<evidence type="ECO:0000269" key="6">
    <source>
    </source>
</evidence>
<evidence type="ECO:0000269" key="7">
    <source>
    </source>
</evidence>
<evidence type="ECO:0000269" key="8">
    <source>
    </source>
</evidence>
<evidence type="ECO:0000269" key="9">
    <source>
    </source>
</evidence>
<evidence type="ECO:0000305" key="10"/>
<organism>
    <name type="scientific">Arabidopsis thaliana</name>
    <name type="common">Mouse-ear cress</name>
    <dbReference type="NCBI Taxonomy" id="3702"/>
    <lineage>
        <taxon>Eukaryota</taxon>
        <taxon>Viridiplantae</taxon>
        <taxon>Streptophyta</taxon>
        <taxon>Embryophyta</taxon>
        <taxon>Tracheophyta</taxon>
        <taxon>Spermatophyta</taxon>
        <taxon>Magnoliopsida</taxon>
        <taxon>eudicotyledons</taxon>
        <taxon>Gunneridae</taxon>
        <taxon>Pentapetalae</taxon>
        <taxon>rosids</taxon>
        <taxon>malvids</taxon>
        <taxon>Brassicales</taxon>
        <taxon>Brassicaceae</taxon>
        <taxon>Camelineae</taxon>
        <taxon>Arabidopsis</taxon>
    </lineage>
</organism>
<accession>Q9ZRV4</accession>
<accession>Q9C5F9</accession>
<sequence length="737" mass="82365">MIDDSSLTAEMEEEESPATTIVPREPPKIQRLEESVVNRIAAGEVIQRPVSAVKELVENSLDADSSSISVVVKDGGLKLIQVSDDGHGIRREDLPILCERHTTSKLTKFEDLFSLSSMGFRGEALASMTYVAHVTVTTITKGQIHGYRVSYRDGVMEHEPKACAAVKGTQIMVENLFYNMIARRKTLQNSADDYGKIVDLLSRMAIHYNNVSFSCRKHGAVKADVHSVVSPSRLDSIRSVYGVSVAKNLMKVEVSSCDSSGCTFDMEGFISNSNYVAKKTILVLFINDRLVECSALKRAIEIVYAATLPKASKPFVYMSINLPREHVDINIHPTKKEVSLLNQEIIIEMIQSEVEVKLRNANDTRTFQEQKVEYIQSTLTSQKSDSPVSQKPSGQKTQKVPVNKMVRTDSSDPAGRLHAFLQPKPQSLPDKVSSLSVVRSSVRQRRNPKETADLSSVQELIAGVDSCCHPGMLETVRNCTYVGMADDVFALVQYNTHLYLANVVNLSKELMYQQTLRRFAHFNAIQLSDPAPLSELILLALKEEDLDPGNDTKDDLKERIAEMNTELLKEKAEMLEEYFSVHIDSSANLSRLPVILDQYTPDMDRVPEFLLCLGNDVEWEDEKSCFQGVSAAIGNFYAMHPPLLPNPSGDGIQFYSKRGESSQEKSDLEGNVDMEDNLDQDLLSDAENAWAQREWSIQHVLFPSMRLFLKPPASMASNGTFVKVASLEKLYKIFERC</sequence>
<feature type="chain" id="PRO_0000421833" description="DNA mismatch repair protein MLH1">
    <location>
        <begin position="1"/>
        <end position="737"/>
    </location>
</feature>
<feature type="region of interest" description="Disordered" evidence="2">
    <location>
        <begin position="1"/>
        <end position="21"/>
    </location>
</feature>
<feature type="region of interest" description="Disordered" evidence="2">
    <location>
        <begin position="378"/>
        <end position="416"/>
    </location>
</feature>
<feature type="compositionally biased region" description="Polar residues" evidence="2">
    <location>
        <begin position="378"/>
        <end position="400"/>
    </location>
</feature>
<dbReference type="EMBL" id="AJ012747">
    <property type="protein sequence ID" value="CAA10163.1"/>
    <property type="molecule type" value="mRNA"/>
</dbReference>
<dbReference type="EMBL" id="AC005359">
    <property type="status" value="NOT_ANNOTATED_CDS"/>
    <property type="molecule type" value="Genomic_DNA"/>
</dbReference>
<dbReference type="EMBL" id="AF072897">
    <property type="status" value="NOT_ANNOTATED_CDS"/>
    <property type="molecule type" value="Genomic_DNA"/>
</dbReference>
<dbReference type="EMBL" id="AL161514">
    <property type="protein sequence ID" value="CAB78038.1"/>
    <property type="molecule type" value="Genomic_DNA"/>
</dbReference>
<dbReference type="EMBL" id="CP002687">
    <property type="protein sequence ID" value="AEE82726.1"/>
    <property type="molecule type" value="Genomic_DNA"/>
</dbReference>
<dbReference type="EMBL" id="AF360278">
    <property type="protein sequence ID" value="AAK25988.1"/>
    <property type="molecule type" value="mRNA"/>
</dbReference>
<dbReference type="PIR" id="F85092">
    <property type="entry name" value="F85092"/>
</dbReference>
<dbReference type="PIR" id="T51620">
    <property type="entry name" value="T51620"/>
</dbReference>
<dbReference type="RefSeq" id="NP_567345.2">
    <property type="nucleotide sequence ID" value="NM_116983.3"/>
</dbReference>
<dbReference type="SMR" id="Q9ZRV4"/>
<dbReference type="FunCoup" id="Q9ZRV4">
    <property type="interactions" value="3424"/>
</dbReference>
<dbReference type="IntAct" id="Q9ZRV4">
    <property type="interactions" value="1"/>
</dbReference>
<dbReference type="STRING" id="3702.Q9ZRV4"/>
<dbReference type="iPTMnet" id="Q9ZRV4"/>
<dbReference type="PaxDb" id="3702-AT4G09140.1"/>
<dbReference type="ProteomicsDB" id="238367"/>
<dbReference type="EnsemblPlants" id="AT4G09140.1">
    <property type="protein sequence ID" value="AT4G09140.1"/>
    <property type="gene ID" value="AT4G09140"/>
</dbReference>
<dbReference type="GeneID" id="826493"/>
<dbReference type="Gramene" id="AT4G09140.1">
    <property type="protein sequence ID" value="AT4G09140.1"/>
    <property type="gene ID" value="AT4G09140"/>
</dbReference>
<dbReference type="KEGG" id="ath:AT4G09140"/>
<dbReference type="Araport" id="AT4G09140"/>
<dbReference type="TAIR" id="AT4G09140">
    <property type="gene designation" value="MLH1"/>
</dbReference>
<dbReference type="eggNOG" id="KOG1979">
    <property type="taxonomic scope" value="Eukaryota"/>
</dbReference>
<dbReference type="HOGENOM" id="CLU_004131_2_0_1"/>
<dbReference type="InParanoid" id="Q9ZRV4"/>
<dbReference type="OMA" id="ANYHVKK"/>
<dbReference type="PhylomeDB" id="Q9ZRV4"/>
<dbReference type="PRO" id="PR:Q9ZRV4"/>
<dbReference type="Proteomes" id="UP000006548">
    <property type="component" value="Chromosome 4"/>
</dbReference>
<dbReference type="ExpressionAtlas" id="Q9ZRV4">
    <property type="expression patterns" value="baseline and differential"/>
</dbReference>
<dbReference type="GO" id="GO:0000785">
    <property type="term" value="C:chromatin"/>
    <property type="evidence" value="ECO:0000314"/>
    <property type="project" value="TAIR"/>
</dbReference>
<dbReference type="GO" id="GO:0032300">
    <property type="term" value="C:mismatch repair complex"/>
    <property type="evidence" value="ECO:0007669"/>
    <property type="project" value="InterPro"/>
</dbReference>
<dbReference type="GO" id="GO:0005634">
    <property type="term" value="C:nucleus"/>
    <property type="evidence" value="ECO:0007669"/>
    <property type="project" value="UniProtKB-SubCell"/>
</dbReference>
<dbReference type="GO" id="GO:0005524">
    <property type="term" value="F:ATP binding"/>
    <property type="evidence" value="ECO:0007669"/>
    <property type="project" value="InterPro"/>
</dbReference>
<dbReference type="GO" id="GO:0016887">
    <property type="term" value="F:ATP hydrolysis activity"/>
    <property type="evidence" value="ECO:0007669"/>
    <property type="project" value="InterPro"/>
</dbReference>
<dbReference type="GO" id="GO:0140664">
    <property type="term" value="F:ATP-dependent DNA damage sensor activity"/>
    <property type="evidence" value="ECO:0007669"/>
    <property type="project" value="InterPro"/>
</dbReference>
<dbReference type="GO" id="GO:0030983">
    <property type="term" value="F:mismatched DNA binding"/>
    <property type="evidence" value="ECO:0007669"/>
    <property type="project" value="InterPro"/>
</dbReference>
<dbReference type="GO" id="GO:0010154">
    <property type="term" value="P:fruit development"/>
    <property type="evidence" value="ECO:0000315"/>
    <property type="project" value="TAIR"/>
</dbReference>
<dbReference type="GO" id="GO:0006298">
    <property type="term" value="P:mismatch repair"/>
    <property type="evidence" value="ECO:0007669"/>
    <property type="project" value="InterPro"/>
</dbReference>
<dbReference type="GO" id="GO:0006312">
    <property type="term" value="P:mitotic recombination"/>
    <property type="evidence" value="ECO:0000315"/>
    <property type="project" value="TAIR"/>
</dbReference>
<dbReference type="GO" id="GO:0009555">
    <property type="term" value="P:pollen development"/>
    <property type="evidence" value="ECO:0000315"/>
    <property type="project" value="TAIR"/>
</dbReference>
<dbReference type="GO" id="GO:0048316">
    <property type="term" value="P:seed development"/>
    <property type="evidence" value="ECO:0000315"/>
    <property type="project" value="TAIR"/>
</dbReference>
<dbReference type="GO" id="GO:0009845">
    <property type="term" value="P:seed germination"/>
    <property type="evidence" value="ECO:0000315"/>
    <property type="project" value="TAIR"/>
</dbReference>
<dbReference type="CDD" id="cd16926">
    <property type="entry name" value="HATPase_MutL-MLH-PMS-like"/>
    <property type="match status" value="1"/>
</dbReference>
<dbReference type="CDD" id="cd03483">
    <property type="entry name" value="MutL_Trans_MLH1"/>
    <property type="match status" value="1"/>
</dbReference>
<dbReference type="FunFam" id="3.30.565.10:FF:000043">
    <property type="entry name" value="DNA mismatch repair protein MLH1"/>
    <property type="match status" value="1"/>
</dbReference>
<dbReference type="FunFam" id="3.30.230.10:FF:000014">
    <property type="entry name" value="DNA mismatch repair protein Mlh1"/>
    <property type="match status" value="1"/>
</dbReference>
<dbReference type="Gene3D" id="3.30.230.10">
    <property type="match status" value="1"/>
</dbReference>
<dbReference type="Gene3D" id="3.30.565.10">
    <property type="entry name" value="Histidine kinase-like ATPase, C-terminal domain"/>
    <property type="match status" value="1"/>
</dbReference>
<dbReference type="InterPro" id="IPR014762">
    <property type="entry name" value="DNA_mismatch_repair_CS"/>
</dbReference>
<dbReference type="InterPro" id="IPR013507">
    <property type="entry name" value="DNA_mismatch_S5_2-like"/>
</dbReference>
<dbReference type="InterPro" id="IPR036890">
    <property type="entry name" value="HATPase_C_sf"/>
</dbReference>
<dbReference type="InterPro" id="IPR032189">
    <property type="entry name" value="Mlh1_C"/>
</dbReference>
<dbReference type="InterPro" id="IPR002099">
    <property type="entry name" value="MutL/Mlh/PMS"/>
</dbReference>
<dbReference type="InterPro" id="IPR038973">
    <property type="entry name" value="MutL/Mlh/Pms-like"/>
</dbReference>
<dbReference type="InterPro" id="IPR020568">
    <property type="entry name" value="Ribosomal_Su5_D2-typ_SF"/>
</dbReference>
<dbReference type="InterPro" id="IPR014721">
    <property type="entry name" value="Ribsml_uS5_D2-typ_fold_subgr"/>
</dbReference>
<dbReference type="NCBIfam" id="TIGR00585">
    <property type="entry name" value="mutl"/>
    <property type="match status" value="1"/>
</dbReference>
<dbReference type="PANTHER" id="PTHR10073">
    <property type="entry name" value="DNA MISMATCH REPAIR PROTEIN MLH, PMS, MUTL"/>
    <property type="match status" value="1"/>
</dbReference>
<dbReference type="PANTHER" id="PTHR10073:SF12">
    <property type="entry name" value="DNA MISMATCH REPAIR PROTEIN MLH1"/>
    <property type="match status" value="1"/>
</dbReference>
<dbReference type="Pfam" id="PF01119">
    <property type="entry name" value="DNA_mis_repair"/>
    <property type="match status" value="1"/>
</dbReference>
<dbReference type="Pfam" id="PF13589">
    <property type="entry name" value="HATPase_c_3"/>
    <property type="match status" value="1"/>
</dbReference>
<dbReference type="Pfam" id="PF16413">
    <property type="entry name" value="Mlh1_C"/>
    <property type="match status" value="1"/>
</dbReference>
<dbReference type="SMART" id="SM01340">
    <property type="entry name" value="DNA_mis_repair"/>
    <property type="match status" value="1"/>
</dbReference>
<dbReference type="SUPFAM" id="SSF55874">
    <property type="entry name" value="ATPase domain of HSP90 chaperone/DNA topoisomerase II/histidine kinase"/>
    <property type="match status" value="1"/>
</dbReference>
<dbReference type="SUPFAM" id="SSF54211">
    <property type="entry name" value="Ribosomal protein S5 domain 2-like"/>
    <property type="match status" value="1"/>
</dbReference>
<dbReference type="PROSITE" id="PS00058">
    <property type="entry name" value="DNA_MISMATCH_REPAIR_1"/>
    <property type="match status" value="1"/>
</dbReference>
<reference key="1">
    <citation type="journal article" date="1999" name="Mol. Gen. Genet.">
        <title>Isolation and characterization of AtMLH1, a MutL homologue from Arabidopsis thaliana.</title>
        <authorList>
            <person name="Jean M."/>
            <person name="Pelletier J."/>
            <person name="Hilpert M."/>
            <person name="Belzille F."/>
            <person name="Kunze R."/>
        </authorList>
    </citation>
    <scope>NUCLEOTIDE SEQUENCE [MRNA]</scope>
    <source>
        <strain>cv. Columbia</strain>
    </source>
</reference>
<reference key="2">
    <citation type="journal article" date="1999" name="Nature">
        <title>Sequence and analysis of chromosome 4 of the plant Arabidopsis thaliana.</title>
        <authorList>
            <person name="Mayer K.F.X."/>
            <person name="Schueller C."/>
            <person name="Wambutt R."/>
            <person name="Murphy G."/>
            <person name="Volckaert G."/>
            <person name="Pohl T."/>
            <person name="Duesterhoeft A."/>
            <person name="Stiekema W."/>
            <person name="Entian K.-D."/>
            <person name="Terryn N."/>
            <person name="Harris B."/>
            <person name="Ansorge W."/>
            <person name="Brandt P."/>
            <person name="Grivell L.A."/>
            <person name="Rieger M."/>
            <person name="Weichselgartner M."/>
            <person name="de Simone V."/>
            <person name="Obermaier B."/>
            <person name="Mache R."/>
            <person name="Mueller M."/>
            <person name="Kreis M."/>
            <person name="Delseny M."/>
            <person name="Puigdomenech P."/>
            <person name="Watson M."/>
            <person name="Schmidtheini T."/>
            <person name="Reichert B."/>
            <person name="Portetelle D."/>
            <person name="Perez-Alonso M."/>
            <person name="Boutry M."/>
            <person name="Bancroft I."/>
            <person name="Vos P."/>
            <person name="Hoheisel J."/>
            <person name="Zimmermann W."/>
            <person name="Wedler H."/>
            <person name="Ridley P."/>
            <person name="Langham S.-A."/>
            <person name="McCullagh B."/>
            <person name="Bilham L."/>
            <person name="Robben J."/>
            <person name="van der Schueren J."/>
            <person name="Grymonprez B."/>
            <person name="Chuang Y.-J."/>
            <person name="Vandenbussche F."/>
            <person name="Braeken M."/>
            <person name="Weltjens I."/>
            <person name="Voet M."/>
            <person name="Bastiaens I."/>
            <person name="Aert R."/>
            <person name="Defoor E."/>
            <person name="Weitzenegger T."/>
            <person name="Bothe G."/>
            <person name="Ramsperger U."/>
            <person name="Hilbert H."/>
            <person name="Braun M."/>
            <person name="Holzer E."/>
            <person name="Brandt A."/>
            <person name="Peters S."/>
            <person name="van Staveren M."/>
            <person name="Dirkse W."/>
            <person name="Mooijman P."/>
            <person name="Klein Lankhorst R."/>
            <person name="Rose M."/>
            <person name="Hauf J."/>
            <person name="Koetter P."/>
            <person name="Berneiser S."/>
            <person name="Hempel S."/>
            <person name="Feldpausch M."/>
            <person name="Lamberth S."/>
            <person name="Van den Daele H."/>
            <person name="De Keyser A."/>
            <person name="Buysshaert C."/>
            <person name="Gielen J."/>
            <person name="Villarroel R."/>
            <person name="De Clercq R."/>
            <person name="van Montagu M."/>
            <person name="Rogers J."/>
            <person name="Cronin A."/>
            <person name="Quail M.A."/>
            <person name="Bray-Allen S."/>
            <person name="Clark L."/>
            <person name="Doggett J."/>
            <person name="Hall S."/>
            <person name="Kay M."/>
            <person name="Lennard N."/>
            <person name="McLay K."/>
            <person name="Mayes R."/>
            <person name="Pettett A."/>
            <person name="Rajandream M.A."/>
            <person name="Lyne M."/>
            <person name="Benes V."/>
            <person name="Rechmann S."/>
            <person name="Borkova D."/>
            <person name="Bloecker H."/>
            <person name="Scharfe M."/>
            <person name="Grimm M."/>
            <person name="Loehnert T.-H."/>
            <person name="Dose S."/>
            <person name="de Haan M."/>
            <person name="Maarse A.C."/>
            <person name="Schaefer M."/>
            <person name="Mueller-Auer S."/>
            <person name="Gabel C."/>
            <person name="Fuchs M."/>
            <person name="Fartmann B."/>
            <person name="Granderath K."/>
            <person name="Dauner D."/>
            <person name="Herzl A."/>
            <person name="Neumann S."/>
            <person name="Argiriou A."/>
            <person name="Vitale D."/>
            <person name="Liguori R."/>
            <person name="Piravandi E."/>
            <person name="Massenet O."/>
            <person name="Quigley F."/>
            <person name="Clabauld G."/>
            <person name="Muendlein A."/>
            <person name="Felber R."/>
            <person name="Schnabl S."/>
            <person name="Hiller R."/>
            <person name="Schmidt W."/>
            <person name="Lecharny A."/>
            <person name="Aubourg S."/>
            <person name="Chefdor F."/>
            <person name="Cooke R."/>
            <person name="Berger C."/>
            <person name="Monfort A."/>
            <person name="Casacuberta E."/>
            <person name="Gibbons T."/>
            <person name="Weber N."/>
            <person name="Vandenbol M."/>
            <person name="Bargues M."/>
            <person name="Terol J."/>
            <person name="Torres A."/>
            <person name="Perez-Perez A."/>
            <person name="Purnelle B."/>
            <person name="Bent E."/>
            <person name="Johnson S."/>
            <person name="Tacon D."/>
            <person name="Jesse T."/>
            <person name="Heijnen L."/>
            <person name="Schwarz S."/>
            <person name="Scholler P."/>
            <person name="Heber S."/>
            <person name="Francs P."/>
            <person name="Bielke C."/>
            <person name="Frishman D."/>
            <person name="Haase D."/>
            <person name="Lemcke K."/>
            <person name="Mewes H.-W."/>
            <person name="Stocker S."/>
            <person name="Zaccaria P."/>
            <person name="Bevan M."/>
            <person name="Wilson R.K."/>
            <person name="de la Bastide M."/>
            <person name="Habermann K."/>
            <person name="Parnell L."/>
            <person name="Dedhia N."/>
            <person name="Gnoj L."/>
            <person name="Schutz K."/>
            <person name="Huang E."/>
            <person name="Spiegel L."/>
            <person name="Sekhon M."/>
            <person name="Murray J."/>
            <person name="Sheet P."/>
            <person name="Cordes M."/>
            <person name="Abu-Threideh J."/>
            <person name="Stoneking T."/>
            <person name="Kalicki J."/>
            <person name="Graves T."/>
            <person name="Harmon G."/>
            <person name="Edwards J."/>
            <person name="Latreille P."/>
            <person name="Courtney L."/>
            <person name="Cloud J."/>
            <person name="Abbott A."/>
            <person name="Scott K."/>
            <person name="Johnson D."/>
            <person name="Minx P."/>
            <person name="Bentley D."/>
            <person name="Fulton B."/>
            <person name="Miller N."/>
            <person name="Greco T."/>
            <person name="Kemp K."/>
            <person name="Kramer J."/>
            <person name="Fulton L."/>
            <person name="Mardis E."/>
            <person name="Dante M."/>
            <person name="Pepin K."/>
            <person name="Hillier L.W."/>
            <person name="Nelson J."/>
            <person name="Spieth J."/>
            <person name="Ryan E."/>
            <person name="Andrews S."/>
            <person name="Geisel C."/>
            <person name="Layman D."/>
            <person name="Du H."/>
            <person name="Ali J."/>
            <person name="Berghoff A."/>
            <person name="Jones K."/>
            <person name="Drone K."/>
            <person name="Cotton M."/>
            <person name="Joshu C."/>
            <person name="Antonoiu B."/>
            <person name="Zidanic M."/>
            <person name="Strong C."/>
            <person name="Sun H."/>
            <person name="Lamar B."/>
            <person name="Yordan C."/>
            <person name="Ma P."/>
            <person name="Zhong J."/>
            <person name="Preston R."/>
            <person name="Vil D."/>
            <person name="Shekher M."/>
            <person name="Matero A."/>
            <person name="Shah R."/>
            <person name="Swaby I.K."/>
            <person name="O'Shaughnessy A."/>
            <person name="Rodriguez M."/>
            <person name="Hoffman J."/>
            <person name="Till S."/>
            <person name="Granat S."/>
            <person name="Shohdy N."/>
            <person name="Hasegawa A."/>
            <person name="Hameed A."/>
            <person name="Lodhi M."/>
            <person name="Johnson A."/>
            <person name="Chen E."/>
            <person name="Marra M.A."/>
            <person name="Martienssen R."/>
            <person name="McCombie W.R."/>
        </authorList>
    </citation>
    <scope>NUCLEOTIDE SEQUENCE [LARGE SCALE GENOMIC DNA]</scope>
    <source>
        <strain>cv. Columbia</strain>
    </source>
</reference>
<reference key="3">
    <citation type="journal article" date="2017" name="Plant J.">
        <title>Araport11: a complete reannotation of the Arabidopsis thaliana reference genome.</title>
        <authorList>
            <person name="Cheng C.Y."/>
            <person name="Krishnakumar V."/>
            <person name="Chan A.P."/>
            <person name="Thibaud-Nissen F."/>
            <person name="Schobel S."/>
            <person name="Town C.D."/>
        </authorList>
    </citation>
    <scope>GENOME REANNOTATION</scope>
    <source>
        <strain>cv. Columbia</strain>
    </source>
</reference>
<reference key="4">
    <citation type="journal article" date="2003" name="Science">
        <title>Empirical analysis of transcriptional activity in the Arabidopsis genome.</title>
        <authorList>
            <person name="Yamada K."/>
            <person name="Lim J."/>
            <person name="Dale J.M."/>
            <person name="Chen H."/>
            <person name="Shinn P."/>
            <person name="Palm C.J."/>
            <person name="Southwick A.M."/>
            <person name="Wu H.C."/>
            <person name="Kim C.J."/>
            <person name="Nguyen M."/>
            <person name="Pham P.K."/>
            <person name="Cheuk R.F."/>
            <person name="Karlin-Newmann G."/>
            <person name="Liu S.X."/>
            <person name="Lam B."/>
            <person name="Sakano H."/>
            <person name="Wu T."/>
            <person name="Yu G."/>
            <person name="Miranda M."/>
            <person name="Quach H.L."/>
            <person name="Tripp M."/>
            <person name="Chang C.H."/>
            <person name="Lee J.M."/>
            <person name="Toriumi M.J."/>
            <person name="Chan M.M."/>
            <person name="Tang C.C."/>
            <person name="Onodera C.S."/>
            <person name="Deng J.M."/>
            <person name="Akiyama K."/>
            <person name="Ansari Y."/>
            <person name="Arakawa T."/>
            <person name="Banh J."/>
            <person name="Banno F."/>
            <person name="Bowser L."/>
            <person name="Brooks S.Y."/>
            <person name="Carninci P."/>
            <person name="Chao Q."/>
            <person name="Choy N."/>
            <person name="Enju A."/>
            <person name="Goldsmith A.D."/>
            <person name="Gurjal M."/>
            <person name="Hansen N.F."/>
            <person name="Hayashizaki Y."/>
            <person name="Johnson-Hopson C."/>
            <person name="Hsuan V.W."/>
            <person name="Iida K."/>
            <person name="Karnes M."/>
            <person name="Khan S."/>
            <person name="Koesema E."/>
            <person name="Ishida J."/>
            <person name="Jiang P.X."/>
            <person name="Jones T."/>
            <person name="Kawai J."/>
            <person name="Kamiya A."/>
            <person name="Meyers C."/>
            <person name="Nakajima M."/>
            <person name="Narusaka M."/>
            <person name="Seki M."/>
            <person name="Sakurai T."/>
            <person name="Satou M."/>
            <person name="Tamse R."/>
            <person name="Vaysberg M."/>
            <person name="Wallender E.K."/>
            <person name="Wong C."/>
            <person name="Yamamura Y."/>
            <person name="Yuan S."/>
            <person name="Shinozaki K."/>
            <person name="Davis R.W."/>
            <person name="Theologis A."/>
            <person name="Ecker J.R."/>
        </authorList>
    </citation>
    <scope>NUCLEOTIDE SEQUENCE [LARGE SCALE MRNA] OF 6-737</scope>
    <source>
        <strain>cv. Columbia</strain>
    </source>
</reference>
<reference key="5">
    <citation type="journal article" date="2006" name="Biochem. Soc. Trans.">
        <title>Control of meiotic recombination in Arabidopsis: role of the MutL and MutS homologues.</title>
        <authorList>
            <person name="Franklin F.C."/>
            <person name="Higgins J.D."/>
            <person name="Sanchez-Moran E."/>
            <person name="Armstrong S.J."/>
            <person name="Osman K.E."/>
            <person name="Jackson N."/>
            <person name="Jones G.H."/>
        </authorList>
    </citation>
    <scope>DEVELOPMENTAL STAGE</scope>
    <scope>SUBCELLULAR LOCATION</scope>
    <scope>FUNCTION</scope>
</reference>
<reference key="6">
    <citation type="journal article" date="2006" name="EMBO J.">
        <title>Reduced meiotic crossovers and delayed prophase I progression in AtMLH3-deficient Arabidopsis.</title>
        <authorList>
            <person name="Jackson N."/>
            <person name="Sanchez-Moran E."/>
            <person name="Buckling E."/>
            <person name="Armstrong S.J."/>
            <person name="Jones G.H."/>
            <person name="Franklin F.C."/>
        </authorList>
    </citation>
    <scope>TISSUE SPECIFICITY</scope>
    <scope>SUBCELLULAR LOCATION</scope>
    <scope>DEVELOPMENTAL STAGE</scope>
</reference>
<reference key="7">
    <citation type="journal article" date="2007" name="Plant J.">
        <title>An Arabidopsis MLH1 mutant exhibits reproductive defects and reveals a dual role for this gene in mitotic recombination.</title>
        <authorList>
            <person name="Dion E."/>
            <person name="Li L."/>
            <person name="Jean M."/>
            <person name="Belzile F."/>
        </authorList>
    </citation>
    <scope>DISRUPTION PHENOTYPE</scope>
    <scope>FUNCTION</scope>
</reference>
<reference key="8">
    <citation type="journal article" date="2008" name="Plant J.">
        <title>AtMSH5 partners AtMSH4 in the class I meiotic crossover pathway in Arabidopsis thaliana, but is not required for synapsis.</title>
        <authorList>
            <person name="Higgins J.D."/>
            <person name="Vignard J."/>
            <person name="Mercier R."/>
            <person name="Pugh A.G."/>
            <person name="Franklin F.C."/>
            <person name="Jones G.H."/>
        </authorList>
    </citation>
    <scope>DEVELOPMENTAL STAGE</scope>
    <scope>SUBCELLULAR LOCATION</scope>
</reference>
<reference key="9">
    <citation type="journal article" date="2010" name="Cytogenet. Genome Res.">
        <title>An easy protocol for studying chromatin and recombination protein dynamics during Arabidopsis thaliana meiosis: immunodetection of cohesins, histones and MLH1.</title>
        <authorList>
            <person name="Chelysheva L."/>
            <person name="Grandont L."/>
            <person name="Vrielynck N."/>
            <person name="le Guin S."/>
            <person name="Mercier R."/>
            <person name="Grelon M."/>
        </authorList>
    </citation>
    <scope>DEVELOPMENTAL STAGE</scope>
    <scope>SUBCELLULAR LOCATION</scope>
</reference>
<reference key="10">
    <citation type="journal article" date="2013" name="Mol. Biol. Rep.">
        <title>Yeast mutator phenotype enforced by Arabidopsis PMS1 expression.</title>
        <authorList>
            <person name="Galles C."/>
            <person name="Spampinato C.P."/>
        </authorList>
    </citation>
    <scope>FUNCTION</scope>
</reference>
<reference key="11">
    <citation type="journal article" date="2012" name="PLoS Genet.">
        <title>The Arabidopsis HEI10 is a new ZMM protein related to Zip3.</title>
        <authorList>
            <person name="Chelysheva L."/>
            <person name="Vezon D."/>
            <person name="Chambon A."/>
            <person name="Gendrot G."/>
            <person name="Pereira L."/>
            <person name="Lemhemdi A."/>
            <person name="Vrielynck N."/>
            <person name="Le Guin S."/>
            <person name="Novatchkova M."/>
            <person name="Grelon M."/>
        </authorList>
    </citation>
    <scope>DEVELOPMENTAL STAGE</scope>
    <scope>SUBCELLULAR LOCATION</scope>
</reference>
<gene>
    <name type="primary">MLH1</name>
    <name type="ordered locus">At4g09140</name>
    <name type="ORF">F23J3.170</name>
    <name type="ORF">T8A17.9</name>
</gene>